<accession>Q98959</accession>
<sequence>MKTLLLTLVVVTIVCLDLGYTLKCNKLVPLFYKTCPAGKNLCYKMFMVATPKVPVKRGCIDVCPKNSLLVKYVCCNTDRCN</sequence>
<organism>
    <name type="scientific">Naja atra</name>
    <name type="common">Chinese cobra</name>
    <dbReference type="NCBI Taxonomy" id="8656"/>
    <lineage>
        <taxon>Eukaryota</taxon>
        <taxon>Metazoa</taxon>
        <taxon>Chordata</taxon>
        <taxon>Craniata</taxon>
        <taxon>Vertebrata</taxon>
        <taxon>Euteleostomi</taxon>
        <taxon>Lepidosauria</taxon>
        <taxon>Squamata</taxon>
        <taxon>Bifurcata</taxon>
        <taxon>Unidentata</taxon>
        <taxon>Episquamata</taxon>
        <taxon>Toxicofera</taxon>
        <taxon>Serpentes</taxon>
        <taxon>Colubroidea</taxon>
        <taxon>Elapidae</taxon>
        <taxon>Elapinae</taxon>
        <taxon>Naja</taxon>
    </lineage>
</organism>
<protein>
    <recommendedName>
        <fullName>Cytotoxin 3a</fullName>
    </recommendedName>
    <alternativeName>
        <fullName>Cardiotoxin-31</fullName>
        <shortName>Ctx-31</shortName>
    </alternativeName>
    <alternativeName>
        <fullName>Cardiotoxin-3a</fullName>
    </alternativeName>
</protein>
<name>3SA3A_NAJAT</name>
<evidence type="ECO:0000250" key="1"/>
<evidence type="ECO:0000250" key="2">
    <source>
        <dbReference type="UniProtKB" id="P60301"/>
    </source>
</evidence>
<evidence type="ECO:0000250" key="3">
    <source>
        <dbReference type="UniProtKB" id="P60304"/>
    </source>
</evidence>
<evidence type="ECO:0000305" key="4"/>
<feature type="signal peptide" evidence="1">
    <location>
        <begin position="1"/>
        <end position="21"/>
    </location>
</feature>
<feature type="chain" id="PRO_0000035372" description="Cytotoxin 3a">
    <location>
        <begin position="22"/>
        <end position="81"/>
    </location>
</feature>
<feature type="disulfide bond" evidence="2">
    <location>
        <begin position="24"/>
        <end position="42"/>
    </location>
</feature>
<feature type="disulfide bond" evidence="2">
    <location>
        <begin position="35"/>
        <end position="59"/>
    </location>
</feature>
<feature type="disulfide bond" evidence="2">
    <location>
        <begin position="63"/>
        <end position="74"/>
    </location>
</feature>
<feature type="disulfide bond" evidence="2">
    <location>
        <begin position="75"/>
        <end position="80"/>
    </location>
</feature>
<proteinExistence type="inferred from homology"/>
<reference key="1">
    <citation type="submission" date="1996-05" db="EMBL/GenBank/DDBJ databases">
        <authorList>
            <person name="Chu R.C."/>
            <person name="Yang C.-C."/>
        </authorList>
    </citation>
    <scope>NUCLEOTIDE SEQUENCE [MRNA]</scope>
    <source>
        <tissue>Venom gland</tissue>
    </source>
</reference>
<reference key="2">
    <citation type="journal article" date="2004" name="Biochem. Genet.">
        <title>Molecular cloning and evolution of the genes encoding the precursors of taiwan cobra cardiotoxin and cardiotoxin-like basic protein.</title>
        <authorList>
            <person name="Chang L.-S."/>
            <person name="Lin S.-K."/>
            <person name="Chung C."/>
        </authorList>
    </citation>
    <scope>NUCLEOTIDE SEQUENCE [GENOMIC DNA]</scope>
    <source>
        <tissue>Liver</tissue>
    </source>
</reference>
<keyword id="KW-0123">Cardiotoxin</keyword>
<keyword id="KW-0204">Cytolysis</keyword>
<keyword id="KW-1015">Disulfide bond</keyword>
<keyword id="KW-0472">Membrane</keyword>
<keyword id="KW-0964">Secreted</keyword>
<keyword id="KW-0732">Signal</keyword>
<keyword id="KW-1052">Target cell membrane</keyword>
<keyword id="KW-1053">Target membrane</keyword>
<keyword id="KW-0800">Toxin</keyword>
<comment type="function">
    <text evidence="2 3">Shows cytolytic activity on many different cells by forming pore in lipid membranes. In vivo, increases heart rate or kills the animal by cardiac arrest. In addition, it binds to heparin with high affinity, interacts with Kv channel-interacting protein 1 (KCNIP1) in a calcium-independent manner, and binds to integrin alpha-V/beta-3 (ITGAV/ITGB3) with moderate affinity.</text>
</comment>
<comment type="subunit">
    <text evidence="2">Monomer in solution; Homodimer and oligomer in the presence of negatively charged lipids forming a pore with a size ranging between 20 and 30 Angstroms.</text>
</comment>
<comment type="subcellular location">
    <subcellularLocation>
        <location evidence="1">Secreted</location>
    </subcellularLocation>
    <subcellularLocation>
        <location evidence="2">Target cell membrane</location>
    </subcellularLocation>
</comment>
<comment type="tissue specificity">
    <text evidence="4">Expressed by the venom gland.</text>
</comment>
<comment type="miscellaneous">
    <text evidence="4">Is classified as a P-type cytotoxin, since a proline residue stands at position 51 (Pro-31 in standard classification).</text>
</comment>
<comment type="similarity">
    <text evidence="4">Belongs to the three-finger toxin family. Short-chain subfamily. Type IA cytotoxin sub-subfamily.</text>
</comment>
<dbReference type="EMBL" id="U58487">
    <property type="protein sequence ID" value="AAB18383.1"/>
    <property type="molecule type" value="mRNA"/>
</dbReference>
<dbReference type="EMBL" id="AJ238733">
    <property type="protein sequence ID" value="CAB42053.1"/>
    <property type="molecule type" value="Genomic_DNA"/>
</dbReference>
<dbReference type="SMR" id="Q98959"/>
<dbReference type="GO" id="GO:0005576">
    <property type="term" value="C:extracellular region"/>
    <property type="evidence" value="ECO:0007669"/>
    <property type="project" value="UniProtKB-SubCell"/>
</dbReference>
<dbReference type="GO" id="GO:0016020">
    <property type="term" value="C:membrane"/>
    <property type="evidence" value="ECO:0007669"/>
    <property type="project" value="UniProtKB-KW"/>
</dbReference>
<dbReference type="GO" id="GO:0044218">
    <property type="term" value="C:other organism cell membrane"/>
    <property type="evidence" value="ECO:0007669"/>
    <property type="project" value="UniProtKB-KW"/>
</dbReference>
<dbReference type="GO" id="GO:0090729">
    <property type="term" value="F:toxin activity"/>
    <property type="evidence" value="ECO:0007669"/>
    <property type="project" value="UniProtKB-KW"/>
</dbReference>
<dbReference type="GO" id="GO:0031640">
    <property type="term" value="P:killing of cells of another organism"/>
    <property type="evidence" value="ECO:0007669"/>
    <property type="project" value="UniProtKB-KW"/>
</dbReference>
<dbReference type="CDD" id="cd00206">
    <property type="entry name" value="TFP_snake_toxin"/>
    <property type="match status" value="1"/>
</dbReference>
<dbReference type="FunFam" id="2.10.60.10:FF:000024">
    <property type="entry name" value="Cytotoxin 1"/>
    <property type="match status" value="1"/>
</dbReference>
<dbReference type="Gene3D" id="2.10.60.10">
    <property type="entry name" value="CD59"/>
    <property type="match status" value="1"/>
</dbReference>
<dbReference type="InterPro" id="IPR003572">
    <property type="entry name" value="Cytotoxin_Cobra"/>
</dbReference>
<dbReference type="InterPro" id="IPR003571">
    <property type="entry name" value="Snake_3FTx"/>
</dbReference>
<dbReference type="InterPro" id="IPR045860">
    <property type="entry name" value="Snake_toxin-like_sf"/>
</dbReference>
<dbReference type="InterPro" id="IPR018354">
    <property type="entry name" value="Snake_toxin_con_site"/>
</dbReference>
<dbReference type="InterPro" id="IPR054131">
    <property type="entry name" value="Toxin_cobra-type"/>
</dbReference>
<dbReference type="Pfam" id="PF21947">
    <property type="entry name" value="Toxin_cobra-type"/>
    <property type="match status" value="1"/>
</dbReference>
<dbReference type="PRINTS" id="PR00282">
    <property type="entry name" value="CYTOTOXIN"/>
</dbReference>
<dbReference type="SUPFAM" id="SSF57302">
    <property type="entry name" value="Snake toxin-like"/>
    <property type="match status" value="1"/>
</dbReference>
<dbReference type="PROSITE" id="PS00272">
    <property type="entry name" value="SNAKE_TOXIN"/>
    <property type="match status" value="1"/>
</dbReference>